<gene>
    <name evidence="1" type="primary">rhaB</name>
    <name type="ordered locus">SFV_3591</name>
</gene>
<dbReference type="EC" id="2.7.1.5" evidence="1"/>
<dbReference type="EMBL" id="CP000266">
    <property type="protein sequence ID" value="ABF05621.1"/>
    <property type="molecule type" value="Genomic_DNA"/>
</dbReference>
<dbReference type="RefSeq" id="WP_000144088.1">
    <property type="nucleotide sequence ID" value="NC_008258.1"/>
</dbReference>
<dbReference type="SMR" id="Q0SZ94"/>
<dbReference type="KEGG" id="sfv:SFV_3591"/>
<dbReference type="HOGENOM" id="CLU_039395_0_0_6"/>
<dbReference type="UniPathway" id="UPA00541">
    <property type="reaction ID" value="UER00602"/>
</dbReference>
<dbReference type="Proteomes" id="UP000000659">
    <property type="component" value="Chromosome"/>
</dbReference>
<dbReference type="GO" id="GO:0005829">
    <property type="term" value="C:cytosol"/>
    <property type="evidence" value="ECO:0007669"/>
    <property type="project" value="TreeGrafter"/>
</dbReference>
<dbReference type="GO" id="GO:0005524">
    <property type="term" value="F:ATP binding"/>
    <property type="evidence" value="ECO:0007669"/>
    <property type="project" value="UniProtKB-KW"/>
</dbReference>
<dbReference type="GO" id="GO:0004370">
    <property type="term" value="F:glycerol kinase activity"/>
    <property type="evidence" value="ECO:0007669"/>
    <property type="project" value="TreeGrafter"/>
</dbReference>
<dbReference type="GO" id="GO:0008993">
    <property type="term" value="F:rhamnulokinase activity"/>
    <property type="evidence" value="ECO:0007669"/>
    <property type="project" value="UniProtKB-UniRule"/>
</dbReference>
<dbReference type="GO" id="GO:0006071">
    <property type="term" value="P:glycerol metabolic process"/>
    <property type="evidence" value="ECO:0007669"/>
    <property type="project" value="TreeGrafter"/>
</dbReference>
<dbReference type="GO" id="GO:0019301">
    <property type="term" value="P:rhamnose catabolic process"/>
    <property type="evidence" value="ECO:0007669"/>
    <property type="project" value="UniProtKB-UniRule"/>
</dbReference>
<dbReference type="CDD" id="cd07771">
    <property type="entry name" value="ASKHA_NBD_FGGY_RhaB-like"/>
    <property type="match status" value="1"/>
</dbReference>
<dbReference type="FunFam" id="3.30.420.40:FF:000064">
    <property type="entry name" value="Rhamnulokinase"/>
    <property type="match status" value="1"/>
</dbReference>
<dbReference type="FunFam" id="3.30.420.40:FF:000073">
    <property type="entry name" value="Rhamnulokinase"/>
    <property type="match status" value="1"/>
</dbReference>
<dbReference type="Gene3D" id="3.30.420.40">
    <property type="match status" value="2"/>
</dbReference>
<dbReference type="HAMAP" id="MF_01535">
    <property type="entry name" value="Rhamnulokinase"/>
    <property type="match status" value="1"/>
</dbReference>
<dbReference type="InterPro" id="IPR043129">
    <property type="entry name" value="ATPase_NBD"/>
</dbReference>
<dbReference type="InterPro" id="IPR018485">
    <property type="entry name" value="FGGY_C"/>
</dbReference>
<dbReference type="InterPro" id="IPR018484">
    <property type="entry name" value="FGGY_N"/>
</dbReference>
<dbReference type="InterPro" id="IPR013449">
    <property type="entry name" value="Rhamnulokinase"/>
</dbReference>
<dbReference type="NCBIfam" id="NF007925">
    <property type="entry name" value="PRK10640.1"/>
    <property type="match status" value="1"/>
</dbReference>
<dbReference type="NCBIfam" id="TIGR02627">
    <property type="entry name" value="rhamnulo_kin"/>
    <property type="match status" value="1"/>
</dbReference>
<dbReference type="PANTHER" id="PTHR10196:SF93">
    <property type="entry name" value="L-RHAMNULOKINASE"/>
    <property type="match status" value="1"/>
</dbReference>
<dbReference type="PANTHER" id="PTHR10196">
    <property type="entry name" value="SUGAR KINASE"/>
    <property type="match status" value="1"/>
</dbReference>
<dbReference type="Pfam" id="PF02782">
    <property type="entry name" value="FGGY_C"/>
    <property type="match status" value="1"/>
</dbReference>
<dbReference type="Pfam" id="PF00370">
    <property type="entry name" value="FGGY_N"/>
    <property type="match status" value="1"/>
</dbReference>
<dbReference type="SUPFAM" id="SSF53067">
    <property type="entry name" value="Actin-like ATPase domain"/>
    <property type="match status" value="2"/>
</dbReference>
<organism>
    <name type="scientific">Shigella flexneri serotype 5b (strain 8401)</name>
    <dbReference type="NCBI Taxonomy" id="373384"/>
    <lineage>
        <taxon>Bacteria</taxon>
        <taxon>Pseudomonadati</taxon>
        <taxon>Pseudomonadota</taxon>
        <taxon>Gammaproteobacteria</taxon>
        <taxon>Enterobacterales</taxon>
        <taxon>Enterobacteriaceae</taxon>
        <taxon>Shigella</taxon>
    </lineage>
</organism>
<reference key="1">
    <citation type="journal article" date="2006" name="BMC Genomics">
        <title>Complete genome sequence of Shigella flexneri 5b and comparison with Shigella flexneri 2a.</title>
        <authorList>
            <person name="Nie H."/>
            <person name="Yang F."/>
            <person name="Zhang X."/>
            <person name="Yang J."/>
            <person name="Chen L."/>
            <person name="Wang J."/>
            <person name="Xiong Z."/>
            <person name="Peng J."/>
            <person name="Sun L."/>
            <person name="Dong J."/>
            <person name="Xue Y."/>
            <person name="Xu X."/>
            <person name="Chen S."/>
            <person name="Yao Z."/>
            <person name="Shen Y."/>
            <person name="Jin Q."/>
        </authorList>
    </citation>
    <scope>NUCLEOTIDE SEQUENCE [LARGE SCALE GENOMIC DNA]</scope>
    <source>
        <strain>8401</strain>
    </source>
</reference>
<sequence length="489" mass="54050">MTFRNCVAVDLGASSGRVMLARYERECRSLTLREIHRFNNGLHSQNGYVTWDVDSLESAIRLGLNKVCEEGIRIDSIGIDTWGVDFVLLDQQGQRVGLPVAYRDSRTNGLMPQAQQQLGKRDIYQRSGIQFLPFNTLYQLRALTEQQPELIPHIAHALLMPDYFSYRLTGKMNWEYTNATTTQLVNINSDDWDESLLAWSGANKAWFGRPTHPGNVIGHWICPQGNEIPVVAVASHDTASAVIASPLNGSRAAYLSSGTWSLMGFESQTPFTNDTALAANITNEGGAEGRYRVLKNIMGLWLLQRVLQERQINDLPALIAATQALPACRFIINPNDDRFINPDEMCSEIQAACRETAQPIPGSDAELARCIFDSLALLYADVLHELAQLRGEDFSQLHIVGGGCQNTLLNQLCADACGIRVIAGPVEASTLGNIGIELMTLDELNNVDDFRQVVSTTANLTTFTPNPDSEIAHYVAQIHSTRQTKELCA</sequence>
<name>RHAB_SHIF8</name>
<protein>
    <recommendedName>
        <fullName evidence="1">Rhamnulokinase</fullName>
        <shortName evidence="1">RhaB</shortName>
        <ecNumber evidence="1">2.7.1.5</ecNumber>
    </recommendedName>
    <alternativeName>
        <fullName evidence="1">ATP:L-rhamnulose phosphotransferase</fullName>
    </alternativeName>
    <alternativeName>
        <fullName evidence="1">L-rhamnulose 1-kinase</fullName>
    </alternativeName>
    <alternativeName>
        <fullName evidence="1">Rhamnulose kinase</fullName>
    </alternativeName>
</protein>
<evidence type="ECO:0000255" key="1">
    <source>
        <dbReference type="HAMAP-Rule" id="MF_01535"/>
    </source>
</evidence>
<keyword id="KW-0067">ATP-binding</keyword>
<keyword id="KW-1015">Disulfide bond</keyword>
<keyword id="KW-0418">Kinase</keyword>
<keyword id="KW-0460">Magnesium</keyword>
<keyword id="KW-0547">Nucleotide-binding</keyword>
<keyword id="KW-0684">Rhamnose metabolism</keyword>
<keyword id="KW-0808">Transferase</keyword>
<accession>Q0SZ94</accession>
<feature type="chain" id="PRO_0000297523" description="Rhamnulokinase">
    <location>
        <begin position="1"/>
        <end position="489"/>
    </location>
</feature>
<feature type="active site" description="Proton acceptor" evidence="1">
    <location>
        <position position="237"/>
    </location>
</feature>
<feature type="binding site" evidence="1">
    <location>
        <begin position="13"/>
        <end position="17"/>
    </location>
    <ligand>
        <name>ATP</name>
        <dbReference type="ChEBI" id="CHEBI:30616"/>
    </ligand>
</feature>
<feature type="binding site" evidence="1">
    <location>
        <position position="83"/>
    </location>
    <ligand>
        <name>substrate</name>
    </ligand>
</feature>
<feature type="binding site" evidence="1">
    <location>
        <begin position="236"/>
        <end position="238"/>
    </location>
    <ligand>
        <name>substrate</name>
    </ligand>
</feature>
<feature type="binding site" evidence="1">
    <location>
        <position position="259"/>
    </location>
    <ligand>
        <name>ATP</name>
        <dbReference type="ChEBI" id="CHEBI:30616"/>
    </ligand>
</feature>
<feature type="binding site" evidence="1">
    <location>
        <position position="296"/>
    </location>
    <ligand>
        <name>substrate</name>
    </ligand>
</feature>
<feature type="binding site" evidence="1">
    <location>
        <position position="304"/>
    </location>
    <ligand>
        <name>ATP</name>
        <dbReference type="ChEBI" id="CHEBI:30616"/>
    </ligand>
</feature>
<feature type="binding site" evidence="1">
    <location>
        <position position="402"/>
    </location>
    <ligand>
        <name>ATP</name>
        <dbReference type="ChEBI" id="CHEBI:30616"/>
    </ligand>
</feature>
<feature type="disulfide bond" evidence="1">
    <location>
        <begin position="68"/>
        <end position="222"/>
    </location>
</feature>
<feature type="disulfide bond" evidence="1">
    <location>
        <begin position="353"/>
        <end position="370"/>
    </location>
</feature>
<feature type="disulfide bond" evidence="1">
    <location>
        <begin position="413"/>
        <end position="417"/>
    </location>
</feature>
<comment type="function">
    <text evidence="1">Involved in the catabolism of L-rhamnose (6-deoxy-L-mannose). Catalyzes the transfer of the gamma-phosphate group from ATP to the 1-hydroxyl group of L-rhamnulose to yield L-rhamnulose 1-phosphate.</text>
</comment>
<comment type="catalytic activity">
    <reaction evidence="1">
        <text>L-rhamnulose + ATP = L-rhamnulose 1-phosphate + ADP + H(+)</text>
        <dbReference type="Rhea" id="RHEA:20117"/>
        <dbReference type="ChEBI" id="CHEBI:15378"/>
        <dbReference type="ChEBI" id="CHEBI:17897"/>
        <dbReference type="ChEBI" id="CHEBI:30616"/>
        <dbReference type="ChEBI" id="CHEBI:58313"/>
        <dbReference type="ChEBI" id="CHEBI:456216"/>
        <dbReference type="EC" id="2.7.1.5"/>
    </reaction>
</comment>
<comment type="cofactor">
    <cofactor evidence="1">
        <name>Mg(2+)</name>
        <dbReference type="ChEBI" id="CHEBI:18420"/>
    </cofactor>
</comment>
<comment type="pathway">
    <text evidence="1">Carbohydrate degradation; L-rhamnose degradation; glycerone phosphate from L-rhamnose: step 2/3.</text>
</comment>
<comment type="similarity">
    <text evidence="1">Belongs to the rhamnulokinase family.</text>
</comment>
<proteinExistence type="inferred from homology"/>